<name>NIP7_XENLA</name>
<reference key="1">
    <citation type="submission" date="2004-07" db="EMBL/GenBank/DDBJ databases">
        <authorList>
            <consortium name="NIH - Xenopus Gene Collection (XGC) project"/>
        </authorList>
    </citation>
    <scope>NUCLEOTIDE SEQUENCE [LARGE SCALE MRNA]</scope>
    <source>
        <tissue>Ovary</tissue>
    </source>
</reference>
<sequence length="180" mass="20543">MRPLTDEETRAMFEKLSKYIGENIKLLVDRPDGTYCFRLHNDRVYYVSEKILKLATNIARDKLVSFGTCFGKFTKTQKFRLHVTALDYLAPYAKYKVWVKPGAEQSFLYGNHVLKSGLGRITENTSQYQGVVVYSMADVPLGFGVAAKSTQECRKLDPMAIVVFHQADVGEYIRHEDTLT</sequence>
<organism>
    <name type="scientific">Xenopus laevis</name>
    <name type="common">African clawed frog</name>
    <dbReference type="NCBI Taxonomy" id="8355"/>
    <lineage>
        <taxon>Eukaryota</taxon>
        <taxon>Metazoa</taxon>
        <taxon>Chordata</taxon>
        <taxon>Craniata</taxon>
        <taxon>Vertebrata</taxon>
        <taxon>Euteleostomi</taxon>
        <taxon>Amphibia</taxon>
        <taxon>Batrachia</taxon>
        <taxon>Anura</taxon>
        <taxon>Pipoidea</taxon>
        <taxon>Pipidae</taxon>
        <taxon>Xenopodinae</taxon>
        <taxon>Xenopus</taxon>
        <taxon>Xenopus</taxon>
    </lineage>
</organism>
<protein>
    <recommendedName>
        <fullName>60S ribosome subunit biogenesis protein NIP7 homolog</fullName>
    </recommendedName>
</protein>
<dbReference type="EMBL" id="BC076758">
    <property type="protein sequence ID" value="AAH76758.1"/>
    <property type="molecule type" value="mRNA"/>
</dbReference>
<dbReference type="RefSeq" id="NP_001086529.1">
    <property type="nucleotide sequence ID" value="NM_001093060.1"/>
</dbReference>
<dbReference type="SMR" id="Q6DFH9"/>
<dbReference type="DNASU" id="446364"/>
<dbReference type="GeneID" id="446364"/>
<dbReference type="KEGG" id="xla:446364"/>
<dbReference type="AGR" id="Xenbase:XB-GENE-1005416"/>
<dbReference type="CTD" id="446364"/>
<dbReference type="Xenbase" id="XB-GENE-1005416">
    <property type="gene designation" value="nip7.L"/>
</dbReference>
<dbReference type="OMA" id="LISMGTC"/>
<dbReference type="OrthoDB" id="27490at2759"/>
<dbReference type="Proteomes" id="UP000186698">
    <property type="component" value="Chromosome 4L"/>
</dbReference>
<dbReference type="Bgee" id="446364">
    <property type="expression patterns" value="Expressed in neurula embryo and 19 other cell types or tissues"/>
</dbReference>
<dbReference type="GO" id="GO:0005730">
    <property type="term" value="C:nucleolus"/>
    <property type="evidence" value="ECO:0000318"/>
    <property type="project" value="GO_Central"/>
</dbReference>
<dbReference type="GO" id="GO:0030687">
    <property type="term" value="C:preribosome, large subunit precursor"/>
    <property type="evidence" value="ECO:0000318"/>
    <property type="project" value="GO_Central"/>
</dbReference>
<dbReference type="GO" id="GO:0003723">
    <property type="term" value="F:RNA binding"/>
    <property type="evidence" value="ECO:0007669"/>
    <property type="project" value="UniProtKB-KW"/>
</dbReference>
<dbReference type="GO" id="GO:0042273">
    <property type="term" value="P:ribosomal large subunit biogenesis"/>
    <property type="evidence" value="ECO:0000318"/>
    <property type="project" value="GO_Central"/>
</dbReference>
<dbReference type="GO" id="GO:0042255">
    <property type="term" value="P:ribosome assembly"/>
    <property type="evidence" value="ECO:0007669"/>
    <property type="project" value="InterPro"/>
</dbReference>
<dbReference type="CDD" id="cd21146">
    <property type="entry name" value="Nip7_N_euk"/>
    <property type="match status" value="1"/>
</dbReference>
<dbReference type="CDD" id="cd21151">
    <property type="entry name" value="PUA_Nip7-like"/>
    <property type="match status" value="1"/>
</dbReference>
<dbReference type="FunFam" id="2.30.130.10:FF:000002">
    <property type="entry name" value="60S ribosome subunit biogenesis protein NIP7 homolog"/>
    <property type="match status" value="1"/>
</dbReference>
<dbReference type="FunFam" id="3.10.450.220:FF:000001">
    <property type="entry name" value="60S ribosome subunit biogenesis protein NIP7 homolog"/>
    <property type="match status" value="1"/>
</dbReference>
<dbReference type="Gene3D" id="3.10.450.220">
    <property type="match status" value="1"/>
</dbReference>
<dbReference type="Gene3D" id="2.30.130.10">
    <property type="entry name" value="PUA domain"/>
    <property type="match status" value="1"/>
</dbReference>
<dbReference type="InterPro" id="IPR040598">
    <property type="entry name" value="NIP7_N"/>
</dbReference>
<dbReference type="InterPro" id="IPR055359">
    <property type="entry name" value="Nip7_N_euk"/>
</dbReference>
<dbReference type="InterPro" id="IPR002478">
    <property type="entry name" value="PUA"/>
</dbReference>
<dbReference type="InterPro" id="IPR015947">
    <property type="entry name" value="PUA-like_sf"/>
</dbReference>
<dbReference type="InterPro" id="IPR036974">
    <property type="entry name" value="PUA_sf"/>
</dbReference>
<dbReference type="InterPro" id="IPR016686">
    <property type="entry name" value="Ribosomal_synth_fac_NIP7"/>
</dbReference>
<dbReference type="InterPro" id="IPR005155">
    <property type="entry name" value="UPF0113_PUA"/>
</dbReference>
<dbReference type="PANTHER" id="PTHR23415">
    <property type="entry name" value="CYCLIN-DEPENDENT KINASES REGULATORY SUBUNIT/60S RIBOSOME SUBUNIT BIOGENESIS PROTEIN NIP7"/>
    <property type="match status" value="1"/>
</dbReference>
<dbReference type="Pfam" id="PF17833">
    <property type="entry name" value="pre-PUA_NIP7"/>
    <property type="match status" value="1"/>
</dbReference>
<dbReference type="Pfam" id="PF03657">
    <property type="entry name" value="UPF0113"/>
    <property type="match status" value="1"/>
</dbReference>
<dbReference type="PIRSF" id="PIRSF017190">
    <property type="entry name" value="Rbsml_synth_fac_NIP7"/>
    <property type="match status" value="1"/>
</dbReference>
<dbReference type="SMART" id="SM00359">
    <property type="entry name" value="PUA"/>
    <property type="match status" value="1"/>
</dbReference>
<dbReference type="SUPFAM" id="SSF88802">
    <property type="entry name" value="Pre-PUA domain"/>
    <property type="match status" value="1"/>
</dbReference>
<dbReference type="SUPFAM" id="SSF88697">
    <property type="entry name" value="PUA domain-like"/>
    <property type="match status" value="1"/>
</dbReference>
<dbReference type="PROSITE" id="PS50890">
    <property type="entry name" value="PUA"/>
    <property type="match status" value="1"/>
</dbReference>
<evidence type="ECO:0000250" key="1"/>
<evidence type="ECO:0000255" key="2">
    <source>
        <dbReference type="PROSITE-ProRule" id="PRU00161"/>
    </source>
</evidence>
<evidence type="ECO:0000305" key="3"/>
<comment type="function">
    <text evidence="1">Required for proper 34S pre-rRNA processing and 60S ribosome subunit assembly.</text>
</comment>
<comment type="subunit">
    <text evidence="1">Monomer. Interacts with pre-ribosome complex. May bind to RNA. Interacts with NOL8. Interacts with FTSJ3 (By similarity).</text>
</comment>
<comment type="subcellular location">
    <subcellularLocation>
        <location evidence="1">Nucleus</location>
        <location evidence="1">Nucleolus</location>
    </subcellularLocation>
</comment>
<comment type="similarity">
    <text evidence="3">Belongs to the NIP7 family.</text>
</comment>
<keyword id="KW-0539">Nucleus</keyword>
<keyword id="KW-1185">Reference proteome</keyword>
<keyword id="KW-0690">Ribosome biogenesis</keyword>
<keyword id="KW-0694">RNA-binding</keyword>
<gene>
    <name type="primary">nip7</name>
</gene>
<proteinExistence type="evidence at transcript level"/>
<accession>Q6DFH9</accession>
<feature type="chain" id="PRO_0000355569" description="60S ribosome subunit biogenesis protein NIP7 homolog">
    <location>
        <begin position="1"/>
        <end position="180"/>
    </location>
</feature>
<feature type="domain" description="PUA" evidence="2">
    <location>
        <begin position="94"/>
        <end position="170"/>
    </location>
</feature>
<feature type="region of interest" description="N-terminal domain" evidence="1">
    <location>
        <begin position="1"/>
        <end position="92"/>
    </location>
</feature>
<feature type="region of interest" description="C-terminal domain" evidence="1">
    <location>
        <begin position="93"/>
        <end position="180"/>
    </location>
</feature>